<gene>
    <name evidence="1" type="primary">aroK</name>
    <name type="ordered locus">SG2309</name>
</gene>
<sequence>MAEKRNIFLVGPMGAGKSTIGRQLAQQLNMEFFDSDQEIERRTGADVGWVFDVEGEDGFRDREEKVINELTEKQGIVLATGGGSVKSRETRNRLSARGVVVYLETTIEKQLARTQRDKKRPLLQVEAPPREVLEALARERNPLYEEIADVTIRTDEQSAKVVANQIINMLESS</sequence>
<accession>Q2NQJ1</accession>
<name>AROK_SODGM</name>
<proteinExistence type="inferred from homology"/>
<dbReference type="EC" id="2.7.1.71" evidence="1"/>
<dbReference type="EMBL" id="AP008232">
    <property type="protein sequence ID" value="BAE75584.1"/>
    <property type="molecule type" value="Genomic_DNA"/>
</dbReference>
<dbReference type="RefSeq" id="WP_011412117.1">
    <property type="nucleotide sequence ID" value="NZ_LN854557.1"/>
</dbReference>
<dbReference type="SMR" id="Q2NQJ1"/>
<dbReference type="STRING" id="343509.SG2309"/>
<dbReference type="KEGG" id="sgl:SG2309"/>
<dbReference type="eggNOG" id="COG0703">
    <property type="taxonomic scope" value="Bacteria"/>
</dbReference>
<dbReference type="HOGENOM" id="CLU_057607_2_2_6"/>
<dbReference type="OrthoDB" id="9800332at2"/>
<dbReference type="UniPathway" id="UPA00053">
    <property type="reaction ID" value="UER00088"/>
</dbReference>
<dbReference type="Proteomes" id="UP000001932">
    <property type="component" value="Chromosome"/>
</dbReference>
<dbReference type="GO" id="GO:0005829">
    <property type="term" value="C:cytosol"/>
    <property type="evidence" value="ECO:0007669"/>
    <property type="project" value="TreeGrafter"/>
</dbReference>
<dbReference type="GO" id="GO:0005524">
    <property type="term" value="F:ATP binding"/>
    <property type="evidence" value="ECO:0007669"/>
    <property type="project" value="UniProtKB-UniRule"/>
</dbReference>
<dbReference type="GO" id="GO:0000287">
    <property type="term" value="F:magnesium ion binding"/>
    <property type="evidence" value="ECO:0007669"/>
    <property type="project" value="UniProtKB-UniRule"/>
</dbReference>
<dbReference type="GO" id="GO:0004765">
    <property type="term" value="F:shikimate kinase activity"/>
    <property type="evidence" value="ECO:0007669"/>
    <property type="project" value="UniProtKB-UniRule"/>
</dbReference>
<dbReference type="GO" id="GO:0008652">
    <property type="term" value="P:amino acid biosynthetic process"/>
    <property type="evidence" value="ECO:0007669"/>
    <property type="project" value="UniProtKB-KW"/>
</dbReference>
<dbReference type="GO" id="GO:0009073">
    <property type="term" value="P:aromatic amino acid family biosynthetic process"/>
    <property type="evidence" value="ECO:0007669"/>
    <property type="project" value="UniProtKB-KW"/>
</dbReference>
<dbReference type="GO" id="GO:0009423">
    <property type="term" value="P:chorismate biosynthetic process"/>
    <property type="evidence" value="ECO:0007669"/>
    <property type="project" value="UniProtKB-UniRule"/>
</dbReference>
<dbReference type="CDD" id="cd00464">
    <property type="entry name" value="SK"/>
    <property type="match status" value="1"/>
</dbReference>
<dbReference type="FunFam" id="3.40.50.300:FF:000099">
    <property type="entry name" value="Shikimate kinase 1"/>
    <property type="match status" value="1"/>
</dbReference>
<dbReference type="Gene3D" id="3.40.50.300">
    <property type="entry name" value="P-loop containing nucleotide triphosphate hydrolases"/>
    <property type="match status" value="1"/>
</dbReference>
<dbReference type="HAMAP" id="MF_00109">
    <property type="entry name" value="Shikimate_kinase"/>
    <property type="match status" value="1"/>
</dbReference>
<dbReference type="InterPro" id="IPR027417">
    <property type="entry name" value="P-loop_NTPase"/>
</dbReference>
<dbReference type="InterPro" id="IPR031322">
    <property type="entry name" value="Shikimate/glucono_kinase"/>
</dbReference>
<dbReference type="InterPro" id="IPR000623">
    <property type="entry name" value="Shikimate_kinase/TSH1"/>
</dbReference>
<dbReference type="InterPro" id="IPR023000">
    <property type="entry name" value="Shikimate_kinase_CS"/>
</dbReference>
<dbReference type="NCBIfam" id="NF003456">
    <property type="entry name" value="PRK05057.1"/>
    <property type="match status" value="1"/>
</dbReference>
<dbReference type="PANTHER" id="PTHR21087">
    <property type="entry name" value="SHIKIMATE KINASE"/>
    <property type="match status" value="1"/>
</dbReference>
<dbReference type="PANTHER" id="PTHR21087:SF16">
    <property type="entry name" value="SHIKIMATE KINASE 1, CHLOROPLASTIC"/>
    <property type="match status" value="1"/>
</dbReference>
<dbReference type="Pfam" id="PF01202">
    <property type="entry name" value="SKI"/>
    <property type="match status" value="1"/>
</dbReference>
<dbReference type="PRINTS" id="PR01100">
    <property type="entry name" value="SHIKIMTKNASE"/>
</dbReference>
<dbReference type="SUPFAM" id="SSF52540">
    <property type="entry name" value="P-loop containing nucleoside triphosphate hydrolases"/>
    <property type="match status" value="1"/>
</dbReference>
<dbReference type="PROSITE" id="PS01128">
    <property type="entry name" value="SHIKIMATE_KINASE"/>
    <property type="match status" value="1"/>
</dbReference>
<evidence type="ECO:0000255" key="1">
    <source>
        <dbReference type="HAMAP-Rule" id="MF_00109"/>
    </source>
</evidence>
<feature type="chain" id="PRO_0000237937" description="Shikimate kinase 1">
    <location>
        <begin position="1"/>
        <end position="173"/>
    </location>
</feature>
<feature type="binding site" evidence="1">
    <location>
        <begin position="14"/>
        <end position="19"/>
    </location>
    <ligand>
        <name>ATP</name>
        <dbReference type="ChEBI" id="CHEBI:30616"/>
    </ligand>
</feature>
<feature type="binding site" evidence="1">
    <location>
        <position position="18"/>
    </location>
    <ligand>
        <name>Mg(2+)</name>
        <dbReference type="ChEBI" id="CHEBI:18420"/>
    </ligand>
</feature>
<feature type="binding site" evidence="1">
    <location>
        <position position="36"/>
    </location>
    <ligand>
        <name>substrate</name>
    </ligand>
</feature>
<feature type="binding site" evidence="1">
    <location>
        <position position="60"/>
    </location>
    <ligand>
        <name>substrate</name>
    </ligand>
</feature>
<feature type="binding site" evidence="1">
    <location>
        <position position="82"/>
    </location>
    <ligand>
        <name>substrate</name>
    </ligand>
</feature>
<feature type="binding site" evidence="1">
    <location>
        <position position="120"/>
    </location>
    <ligand>
        <name>ATP</name>
        <dbReference type="ChEBI" id="CHEBI:30616"/>
    </ligand>
</feature>
<feature type="binding site" evidence="1">
    <location>
        <position position="140"/>
    </location>
    <ligand>
        <name>substrate</name>
    </ligand>
</feature>
<feature type="binding site" evidence="1">
    <location>
        <position position="157"/>
    </location>
    <ligand>
        <name>ATP</name>
        <dbReference type="ChEBI" id="CHEBI:30616"/>
    </ligand>
</feature>
<keyword id="KW-0028">Amino-acid biosynthesis</keyword>
<keyword id="KW-0057">Aromatic amino acid biosynthesis</keyword>
<keyword id="KW-0067">ATP-binding</keyword>
<keyword id="KW-0963">Cytoplasm</keyword>
<keyword id="KW-0418">Kinase</keyword>
<keyword id="KW-0460">Magnesium</keyword>
<keyword id="KW-0479">Metal-binding</keyword>
<keyword id="KW-0547">Nucleotide-binding</keyword>
<keyword id="KW-0808">Transferase</keyword>
<comment type="function">
    <text evidence="1">Catalyzes the specific phosphorylation of the 3-hydroxyl group of shikimic acid using ATP as a cosubstrate.</text>
</comment>
<comment type="catalytic activity">
    <reaction evidence="1">
        <text>shikimate + ATP = 3-phosphoshikimate + ADP + H(+)</text>
        <dbReference type="Rhea" id="RHEA:13121"/>
        <dbReference type="ChEBI" id="CHEBI:15378"/>
        <dbReference type="ChEBI" id="CHEBI:30616"/>
        <dbReference type="ChEBI" id="CHEBI:36208"/>
        <dbReference type="ChEBI" id="CHEBI:145989"/>
        <dbReference type="ChEBI" id="CHEBI:456216"/>
        <dbReference type="EC" id="2.7.1.71"/>
    </reaction>
</comment>
<comment type="cofactor">
    <cofactor evidence="1">
        <name>Mg(2+)</name>
        <dbReference type="ChEBI" id="CHEBI:18420"/>
    </cofactor>
    <text evidence="1">Binds 1 Mg(2+) ion per subunit.</text>
</comment>
<comment type="pathway">
    <text evidence="1">Metabolic intermediate biosynthesis; chorismate biosynthesis; chorismate from D-erythrose 4-phosphate and phosphoenolpyruvate: step 5/7.</text>
</comment>
<comment type="subunit">
    <text evidence="1">Monomer.</text>
</comment>
<comment type="subcellular location">
    <subcellularLocation>
        <location evidence="1">Cytoplasm</location>
    </subcellularLocation>
</comment>
<comment type="similarity">
    <text evidence="1">Belongs to the shikimate kinase family.</text>
</comment>
<organism>
    <name type="scientific">Sodalis glossinidius (strain morsitans)</name>
    <dbReference type="NCBI Taxonomy" id="343509"/>
    <lineage>
        <taxon>Bacteria</taxon>
        <taxon>Pseudomonadati</taxon>
        <taxon>Pseudomonadota</taxon>
        <taxon>Gammaproteobacteria</taxon>
        <taxon>Enterobacterales</taxon>
        <taxon>Bruguierivoracaceae</taxon>
        <taxon>Sodalis</taxon>
    </lineage>
</organism>
<reference key="1">
    <citation type="journal article" date="2006" name="Genome Res.">
        <title>Massive genome erosion and functional adaptations provide insights into the symbiotic lifestyle of Sodalis glossinidius in the tsetse host.</title>
        <authorList>
            <person name="Toh H."/>
            <person name="Weiss B.L."/>
            <person name="Perkin S.A.H."/>
            <person name="Yamashita A."/>
            <person name="Oshima K."/>
            <person name="Hattori M."/>
            <person name="Aksoy S."/>
        </authorList>
    </citation>
    <scope>NUCLEOTIDE SEQUENCE [LARGE SCALE GENOMIC DNA]</scope>
    <source>
        <strain>morsitans</strain>
    </source>
</reference>
<protein>
    <recommendedName>
        <fullName evidence="1">Shikimate kinase 1</fullName>
        <shortName evidence="1">SK 1</shortName>
        <ecNumber evidence="1">2.7.1.71</ecNumber>
    </recommendedName>
</protein>